<organism>
    <name type="scientific">Shigella flexneri</name>
    <dbReference type="NCBI Taxonomy" id="623"/>
    <lineage>
        <taxon>Bacteria</taxon>
        <taxon>Pseudomonadati</taxon>
        <taxon>Pseudomonadota</taxon>
        <taxon>Gammaproteobacteria</taxon>
        <taxon>Enterobacterales</taxon>
        <taxon>Enterobacteriaceae</taxon>
        <taxon>Shigella</taxon>
    </lineage>
</organism>
<accession>P0ACG5</accession>
<accession>P22982</accession>
<accession>P75618</accession>
<evidence type="ECO:0000250" key="1"/>
<evidence type="ECO:0000250" key="2">
    <source>
        <dbReference type="UniProtKB" id="P0ACG4"/>
    </source>
</evidence>
<evidence type="ECO:0000305" key="3"/>
<name>HOKC_SHIFL</name>
<feature type="chain" id="PRO_0000199032" description="Protein HokC">
    <location>
        <begin position="1"/>
        <end position="50"/>
    </location>
</feature>
<feature type="topological domain" description="Cytoplasmic" evidence="3">
    <location>
        <begin position="1"/>
        <end position="5"/>
    </location>
</feature>
<feature type="transmembrane region" description="Helical; Signal-anchor for type II membrane protein" evidence="3">
    <location>
        <begin position="6"/>
        <end position="24"/>
    </location>
</feature>
<feature type="topological domain" description="Periplasmic" evidence="3">
    <location>
        <begin position="25"/>
        <end position="50"/>
    </location>
</feature>
<keyword id="KW-0997">Cell inner membrane</keyword>
<keyword id="KW-1003">Cell membrane</keyword>
<keyword id="KW-1015">Disulfide bond</keyword>
<keyword id="KW-0472">Membrane</keyword>
<keyword id="KW-1185">Reference proteome</keyword>
<keyword id="KW-0735">Signal-anchor</keyword>
<keyword id="KW-1277">Toxin-antitoxin system</keyword>
<keyword id="KW-0812">Transmembrane</keyword>
<keyword id="KW-1133">Transmembrane helix</keyword>
<gene>
    <name type="primary">hokC</name>
    <name type="ordered locus">SF0015.1</name>
    <name type="ordered locus">S0017</name>
</gene>
<comment type="function">
    <text evidence="2">Toxic component of a type I toxin-antitoxin (TA) system (By similarity). When overexpressed kills cells within minutes; causes collapse of the transmembrane potential and arrest of respiration (By similarity). Its toxic effect is probably neutralized by an antisense antitoxin Sok RNA (By similarity).</text>
</comment>
<comment type="subunit">
    <text evidence="2">Homodimer; disulfide-linked.</text>
</comment>
<comment type="subcellular location">
    <subcellularLocation>
        <location evidence="2">Cell inner membrane</location>
        <topology evidence="1">Single-pass type II membrane protein</topology>
    </subcellularLocation>
</comment>
<comment type="similarity">
    <text evidence="3">Belongs to the Hok/Gef family.</text>
</comment>
<comment type="sequence caution" evidence="3">
    <conflict type="erroneous initiation">
        <sequence resource="EMBL-CDS" id="AAP15562"/>
    </conflict>
    <text>Extended N-terminus.</text>
</comment>
<sequence length="50" mass="5502">MKQHKAMIVALIVICITAVVAALVTRKDLCEVHIRTGQTEVAVFTAYESE</sequence>
<proteinExistence type="inferred from homology"/>
<reference key="1">
    <citation type="journal article" date="2002" name="Nucleic Acids Res.">
        <title>Genome sequence of Shigella flexneri 2a: insights into pathogenicity through comparison with genomes of Escherichia coli K12 and O157.</title>
        <authorList>
            <person name="Jin Q."/>
            <person name="Yuan Z."/>
            <person name="Xu J."/>
            <person name="Wang Y."/>
            <person name="Shen Y."/>
            <person name="Lu W."/>
            <person name="Wang J."/>
            <person name="Liu H."/>
            <person name="Yang J."/>
            <person name="Yang F."/>
            <person name="Zhang X."/>
            <person name="Zhang J."/>
            <person name="Yang G."/>
            <person name="Wu H."/>
            <person name="Qu D."/>
            <person name="Dong J."/>
            <person name="Sun L."/>
            <person name="Xue Y."/>
            <person name="Zhao A."/>
            <person name="Gao Y."/>
            <person name="Zhu J."/>
            <person name="Kan B."/>
            <person name="Ding K."/>
            <person name="Chen S."/>
            <person name="Cheng H."/>
            <person name="Yao Z."/>
            <person name="He B."/>
            <person name="Chen R."/>
            <person name="Ma D."/>
            <person name="Qiang B."/>
            <person name="Wen Y."/>
            <person name="Hou Y."/>
            <person name="Yu J."/>
        </authorList>
    </citation>
    <scope>NUCLEOTIDE SEQUENCE [LARGE SCALE GENOMIC DNA]</scope>
    <source>
        <strain>301 / Serotype 2a</strain>
    </source>
</reference>
<reference key="2">
    <citation type="journal article" date="2003" name="Infect. Immun.">
        <title>Complete genome sequence and comparative genomics of Shigella flexneri serotype 2a strain 2457T.</title>
        <authorList>
            <person name="Wei J."/>
            <person name="Goldberg M.B."/>
            <person name="Burland V."/>
            <person name="Venkatesan M.M."/>
            <person name="Deng W."/>
            <person name="Fournier G."/>
            <person name="Mayhew G.F."/>
            <person name="Plunkett G. III"/>
            <person name="Rose D.J."/>
            <person name="Darling A."/>
            <person name="Mau B."/>
            <person name="Perna N.T."/>
            <person name="Payne S.M."/>
            <person name="Runyen-Janecky L.J."/>
            <person name="Zhou S."/>
            <person name="Schwartz D.C."/>
            <person name="Blattner F.R."/>
        </authorList>
    </citation>
    <scope>NUCLEOTIDE SEQUENCE [LARGE SCALE GENOMIC DNA]</scope>
    <source>
        <strain>ATCC 700930 / 2457T / Serotype 2a</strain>
    </source>
</reference>
<protein>
    <recommendedName>
        <fullName>Protein HokC</fullName>
    </recommendedName>
</protein>
<dbReference type="EMBL" id="AE005674">
    <property type="status" value="NOT_ANNOTATED_CDS"/>
    <property type="molecule type" value="Genomic_DNA"/>
</dbReference>
<dbReference type="EMBL" id="AE014073">
    <property type="protein sequence ID" value="AAP15562.1"/>
    <property type="status" value="ALT_INIT"/>
    <property type="molecule type" value="Genomic_DNA"/>
</dbReference>
<dbReference type="SMR" id="P0ACG5"/>
<dbReference type="KEGG" id="sfx:S0017"/>
<dbReference type="PATRIC" id="fig|623.156.peg.3045"/>
<dbReference type="HOGENOM" id="CLU_177638_2_0_6"/>
<dbReference type="Proteomes" id="UP000001006">
    <property type="component" value="Chromosome"/>
</dbReference>
<dbReference type="Proteomes" id="UP000002673">
    <property type="component" value="Chromosome"/>
</dbReference>
<dbReference type="GO" id="GO:0005886">
    <property type="term" value="C:plasma membrane"/>
    <property type="evidence" value="ECO:0007669"/>
    <property type="project" value="UniProtKB-SubCell"/>
</dbReference>
<dbReference type="InterPro" id="IPR000021">
    <property type="entry name" value="Hok/gef_toxin"/>
</dbReference>
<dbReference type="InterPro" id="IPR018084">
    <property type="entry name" value="Hok/gef_toxin_CS"/>
</dbReference>
<dbReference type="Pfam" id="PF01848">
    <property type="entry name" value="HOK_GEF"/>
    <property type="match status" value="1"/>
</dbReference>
<dbReference type="PRINTS" id="PR00281">
    <property type="entry name" value="HOKGEFTOXIC"/>
</dbReference>
<dbReference type="PROSITE" id="PS00556">
    <property type="entry name" value="HOK_GEF"/>
    <property type="match status" value="1"/>
</dbReference>